<gene>
    <name evidence="1" type="primary">eno</name>
    <name type="ordered locus">TGAM_0077</name>
</gene>
<protein>
    <recommendedName>
        <fullName evidence="1">Enolase</fullName>
        <ecNumber evidence="1">4.2.1.11</ecNumber>
    </recommendedName>
    <alternativeName>
        <fullName evidence="1">2-phospho-D-glycerate hydro-lyase</fullName>
    </alternativeName>
    <alternativeName>
        <fullName evidence="1">2-phosphoglycerate dehydratase</fullName>
    </alternativeName>
</protein>
<reference key="1">
    <citation type="journal article" date="2007" name="Genome Biol.">
        <title>Genome analysis and genome-wide proteomics of Thermococcus gammatolerans, the most radioresistant organism known amongst the Archaea.</title>
        <authorList>
            <person name="Zivanovic Y."/>
            <person name="Armengaud J."/>
            <person name="Lagorce A."/>
            <person name="Leplat C."/>
            <person name="Guerin P."/>
            <person name="Dutertre M."/>
            <person name="Anthouard V."/>
            <person name="Forterre P."/>
            <person name="Wincker P."/>
            <person name="Confalonieri F."/>
        </authorList>
    </citation>
    <scope>NUCLEOTIDE SEQUENCE [LARGE SCALE GENOMIC DNA]</scope>
    <source>
        <strain>DSM 15229 / JCM 11827 / EJ3</strain>
    </source>
</reference>
<sequence>MENPFEITAVVAREILDSRGNPTVEVEVYTPVSMGRAAVPSGASTGTHEALELRDGGKRFHGKGVRRAVENVNKIIAPEIIGMDVTWQRDIDMLMIELDGTENKSNLGANAILGVSLAVAKAAANALGLPLYQYIGGTNAYVMPVPMSNVINGGVHAGNELDFQEFMIMPVGAKSFREGIRWVSETYHTLKKVIAEKYGKNAVNVGDEGGFAPPMKEVTEPLEVLIKAIEEAGYKPGDEIAFALDAASSEFYDEKLGKYVVGGKEYDRGELLELYRELVSKYPIVSIEDPFHEEDWEGFVMITRELGGKIQIVGDDLFVTNPKRIRKGIEMGAANALLLKVNQIGTLSEAIDAAYTAFRAGYGVVVSHRSGETEDATIADLAVALNAGQIKTGAPARSDRNAKYNQLIRIEEELEGIAVYPGKRFRNPFL</sequence>
<feature type="chain" id="PRO_1000205110" description="Enolase">
    <location>
        <begin position="1"/>
        <end position="430"/>
    </location>
</feature>
<feature type="active site" description="Proton donor" evidence="1">
    <location>
        <position position="208"/>
    </location>
</feature>
<feature type="active site" description="Proton acceptor" evidence="1">
    <location>
        <position position="340"/>
    </location>
</feature>
<feature type="binding site" evidence="1">
    <location>
        <position position="164"/>
    </location>
    <ligand>
        <name>(2R)-2-phosphoglycerate</name>
        <dbReference type="ChEBI" id="CHEBI:58289"/>
    </ligand>
</feature>
<feature type="binding site" evidence="1">
    <location>
        <position position="245"/>
    </location>
    <ligand>
        <name>Mg(2+)</name>
        <dbReference type="ChEBI" id="CHEBI:18420"/>
    </ligand>
</feature>
<feature type="binding site" evidence="1">
    <location>
        <position position="288"/>
    </location>
    <ligand>
        <name>Mg(2+)</name>
        <dbReference type="ChEBI" id="CHEBI:18420"/>
    </ligand>
</feature>
<feature type="binding site" evidence="1">
    <location>
        <position position="315"/>
    </location>
    <ligand>
        <name>Mg(2+)</name>
        <dbReference type="ChEBI" id="CHEBI:18420"/>
    </ligand>
</feature>
<feature type="binding site" evidence="1">
    <location>
        <position position="340"/>
    </location>
    <ligand>
        <name>(2R)-2-phosphoglycerate</name>
        <dbReference type="ChEBI" id="CHEBI:58289"/>
    </ligand>
</feature>
<feature type="binding site" evidence="1">
    <location>
        <position position="369"/>
    </location>
    <ligand>
        <name>(2R)-2-phosphoglycerate</name>
        <dbReference type="ChEBI" id="CHEBI:58289"/>
    </ligand>
</feature>
<feature type="binding site" evidence="1">
    <location>
        <position position="370"/>
    </location>
    <ligand>
        <name>(2R)-2-phosphoglycerate</name>
        <dbReference type="ChEBI" id="CHEBI:58289"/>
    </ligand>
</feature>
<feature type="binding site" evidence="1">
    <location>
        <position position="391"/>
    </location>
    <ligand>
        <name>(2R)-2-phosphoglycerate</name>
        <dbReference type="ChEBI" id="CHEBI:58289"/>
    </ligand>
</feature>
<evidence type="ECO:0000255" key="1">
    <source>
        <dbReference type="HAMAP-Rule" id="MF_00318"/>
    </source>
</evidence>
<comment type="function">
    <text evidence="1">Catalyzes the reversible conversion of 2-phosphoglycerate (2-PG) into phosphoenolpyruvate (PEP). It is essential for the degradation of carbohydrates via glycolysis.</text>
</comment>
<comment type="catalytic activity">
    <reaction evidence="1">
        <text>(2R)-2-phosphoglycerate = phosphoenolpyruvate + H2O</text>
        <dbReference type="Rhea" id="RHEA:10164"/>
        <dbReference type="ChEBI" id="CHEBI:15377"/>
        <dbReference type="ChEBI" id="CHEBI:58289"/>
        <dbReference type="ChEBI" id="CHEBI:58702"/>
        <dbReference type="EC" id="4.2.1.11"/>
    </reaction>
</comment>
<comment type="cofactor">
    <cofactor evidence="1">
        <name>Mg(2+)</name>
        <dbReference type="ChEBI" id="CHEBI:18420"/>
    </cofactor>
    <text evidence="1">Binds a second Mg(2+) ion via substrate during catalysis.</text>
</comment>
<comment type="pathway">
    <text evidence="1">Carbohydrate degradation; glycolysis; pyruvate from D-glyceraldehyde 3-phosphate: step 4/5.</text>
</comment>
<comment type="subcellular location">
    <subcellularLocation>
        <location evidence="1">Cytoplasm</location>
    </subcellularLocation>
    <subcellularLocation>
        <location evidence="1">Secreted</location>
    </subcellularLocation>
    <subcellularLocation>
        <location evidence="1">Cell surface</location>
    </subcellularLocation>
    <text evidence="1">Fractions of enolase are present in both the cytoplasm and on the cell surface.</text>
</comment>
<comment type="similarity">
    <text evidence="1">Belongs to the enolase family.</text>
</comment>
<name>ENO_THEGJ</name>
<proteinExistence type="inferred from homology"/>
<organism>
    <name type="scientific">Thermococcus gammatolerans (strain DSM 15229 / JCM 11827 / EJ3)</name>
    <dbReference type="NCBI Taxonomy" id="593117"/>
    <lineage>
        <taxon>Archaea</taxon>
        <taxon>Methanobacteriati</taxon>
        <taxon>Methanobacteriota</taxon>
        <taxon>Thermococci</taxon>
        <taxon>Thermococcales</taxon>
        <taxon>Thermococcaceae</taxon>
        <taxon>Thermococcus</taxon>
    </lineage>
</organism>
<accession>C5A2S7</accession>
<keyword id="KW-0963">Cytoplasm</keyword>
<keyword id="KW-0324">Glycolysis</keyword>
<keyword id="KW-0456">Lyase</keyword>
<keyword id="KW-0460">Magnesium</keyword>
<keyword id="KW-0479">Metal-binding</keyword>
<keyword id="KW-1185">Reference proteome</keyword>
<keyword id="KW-0964">Secreted</keyword>
<dbReference type="EC" id="4.2.1.11" evidence="1"/>
<dbReference type="EMBL" id="CP001398">
    <property type="protein sequence ID" value="ACS32579.1"/>
    <property type="molecule type" value="Genomic_DNA"/>
</dbReference>
<dbReference type="RefSeq" id="WP_015857702.1">
    <property type="nucleotide sequence ID" value="NC_012804.1"/>
</dbReference>
<dbReference type="SMR" id="C5A2S7"/>
<dbReference type="STRING" id="593117.TGAM_0077"/>
<dbReference type="PaxDb" id="593117-TGAM_0077"/>
<dbReference type="GeneID" id="7988238"/>
<dbReference type="KEGG" id="tga:TGAM_0077"/>
<dbReference type="PATRIC" id="fig|593117.10.peg.79"/>
<dbReference type="eggNOG" id="arCOG01169">
    <property type="taxonomic scope" value="Archaea"/>
</dbReference>
<dbReference type="HOGENOM" id="CLU_031223_2_1_2"/>
<dbReference type="OrthoDB" id="8680at2157"/>
<dbReference type="UniPathway" id="UPA00109">
    <property type="reaction ID" value="UER00187"/>
</dbReference>
<dbReference type="Proteomes" id="UP000001488">
    <property type="component" value="Chromosome"/>
</dbReference>
<dbReference type="GO" id="GO:0009986">
    <property type="term" value="C:cell surface"/>
    <property type="evidence" value="ECO:0007669"/>
    <property type="project" value="UniProtKB-SubCell"/>
</dbReference>
<dbReference type="GO" id="GO:0005576">
    <property type="term" value="C:extracellular region"/>
    <property type="evidence" value="ECO:0007669"/>
    <property type="project" value="UniProtKB-SubCell"/>
</dbReference>
<dbReference type="GO" id="GO:0000015">
    <property type="term" value="C:phosphopyruvate hydratase complex"/>
    <property type="evidence" value="ECO:0007669"/>
    <property type="project" value="InterPro"/>
</dbReference>
<dbReference type="GO" id="GO:0000287">
    <property type="term" value="F:magnesium ion binding"/>
    <property type="evidence" value="ECO:0007669"/>
    <property type="project" value="UniProtKB-UniRule"/>
</dbReference>
<dbReference type="GO" id="GO:0004634">
    <property type="term" value="F:phosphopyruvate hydratase activity"/>
    <property type="evidence" value="ECO:0007669"/>
    <property type="project" value="UniProtKB-UniRule"/>
</dbReference>
<dbReference type="GO" id="GO:0006096">
    <property type="term" value="P:glycolytic process"/>
    <property type="evidence" value="ECO:0007669"/>
    <property type="project" value="UniProtKB-UniRule"/>
</dbReference>
<dbReference type="CDD" id="cd03313">
    <property type="entry name" value="enolase"/>
    <property type="match status" value="1"/>
</dbReference>
<dbReference type="FunFam" id="3.30.390.10:FF:000001">
    <property type="entry name" value="Enolase"/>
    <property type="match status" value="1"/>
</dbReference>
<dbReference type="Gene3D" id="3.20.20.120">
    <property type="entry name" value="Enolase-like C-terminal domain"/>
    <property type="match status" value="1"/>
</dbReference>
<dbReference type="Gene3D" id="3.30.390.10">
    <property type="entry name" value="Enolase-like, N-terminal domain"/>
    <property type="match status" value="1"/>
</dbReference>
<dbReference type="HAMAP" id="MF_00318">
    <property type="entry name" value="Enolase"/>
    <property type="match status" value="1"/>
</dbReference>
<dbReference type="InterPro" id="IPR000941">
    <property type="entry name" value="Enolase"/>
</dbReference>
<dbReference type="InterPro" id="IPR036849">
    <property type="entry name" value="Enolase-like_C_sf"/>
</dbReference>
<dbReference type="InterPro" id="IPR029017">
    <property type="entry name" value="Enolase-like_N"/>
</dbReference>
<dbReference type="InterPro" id="IPR020810">
    <property type="entry name" value="Enolase_C"/>
</dbReference>
<dbReference type="InterPro" id="IPR020809">
    <property type="entry name" value="Enolase_CS"/>
</dbReference>
<dbReference type="InterPro" id="IPR020811">
    <property type="entry name" value="Enolase_N"/>
</dbReference>
<dbReference type="NCBIfam" id="TIGR01060">
    <property type="entry name" value="eno"/>
    <property type="match status" value="1"/>
</dbReference>
<dbReference type="PANTHER" id="PTHR11902">
    <property type="entry name" value="ENOLASE"/>
    <property type="match status" value="1"/>
</dbReference>
<dbReference type="PANTHER" id="PTHR11902:SF1">
    <property type="entry name" value="ENOLASE"/>
    <property type="match status" value="1"/>
</dbReference>
<dbReference type="Pfam" id="PF00113">
    <property type="entry name" value="Enolase_C"/>
    <property type="match status" value="1"/>
</dbReference>
<dbReference type="Pfam" id="PF03952">
    <property type="entry name" value="Enolase_N"/>
    <property type="match status" value="1"/>
</dbReference>
<dbReference type="PIRSF" id="PIRSF001400">
    <property type="entry name" value="Enolase"/>
    <property type="match status" value="1"/>
</dbReference>
<dbReference type="PRINTS" id="PR00148">
    <property type="entry name" value="ENOLASE"/>
</dbReference>
<dbReference type="SFLD" id="SFLDF00002">
    <property type="entry name" value="enolase"/>
    <property type="match status" value="1"/>
</dbReference>
<dbReference type="SFLD" id="SFLDG00178">
    <property type="entry name" value="enolase"/>
    <property type="match status" value="1"/>
</dbReference>
<dbReference type="SMART" id="SM01192">
    <property type="entry name" value="Enolase_C"/>
    <property type="match status" value="1"/>
</dbReference>
<dbReference type="SMART" id="SM01193">
    <property type="entry name" value="Enolase_N"/>
    <property type="match status" value="1"/>
</dbReference>
<dbReference type="SUPFAM" id="SSF51604">
    <property type="entry name" value="Enolase C-terminal domain-like"/>
    <property type="match status" value="1"/>
</dbReference>
<dbReference type="SUPFAM" id="SSF54826">
    <property type="entry name" value="Enolase N-terminal domain-like"/>
    <property type="match status" value="1"/>
</dbReference>
<dbReference type="PROSITE" id="PS00164">
    <property type="entry name" value="ENOLASE"/>
    <property type="match status" value="1"/>
</dbReference>